<feature type="transit peptide" description="Chloroplast and mitochondrion" evidence="2">
    <location>
        <begin position="1"/>
        <end position="65"/>
    </location>
</feature>
<feature type="chain" id="PRO_0000421964" description="Isocitrate dehydrogenase [NADP], chloroplastic/mitochondrial">
    <location>
        <begin position="66"/>
        <end position="485"/>
    </location>
</feature>
<feature type="binding site" evidence="1">
    <location>
        <begin position="147"/>
        <end position="149"/>
    </location>
    <ligand>
        <name>NADP(+)</name>
        <dbReference type="ChEBI" id="CHEBI:58349"/>
    </ligand>
</feature>
<feature type="binding site" evidence="1">
    <location>
        <position position="149"/>
    </location>
    <ligand>
        <name>substrate</name>
    </ligand>
</feature>
<feature type="binding site" evidence="1">
    <location>
        <position position="154"/>
    </location>
    <ligand>
        <name>NADP(+)</name>
        <dbReference type="ChEBI" id="CHEBI:58349"/>
    </ligand>
</feature>
<feature type="binding site" evidence="1">
    <location>
        <begin position="166"/>
        <end position="172"/>
    </location>
    <ligand>
        <name>substrate</name>
    </ligand>
</feature>
<feature type="binding site" evidence="1">
    <location>
        <position position="181"/>
    </location>
    <ligand>
        <name>substrate</name>
    </ligand>
</feature>
<feature type="binding site" evidence="1">
    <location>
        <position position="204"/>
    </location>
    <ligand>
        <name>substrate</name>
    </ligand>
</feature>
<feature type="binding site" evidence="1">
    <location>
        <position position="323"/>
    </location>
    <ligand>
        <name>Mn(2+)</name>
        <dbReference type="ChEBI" id="CHEBI:29035"/>
    </ligand>
</feature>
<feature type="binding site" evidence="1">
    <location>
        <position position="331"/>
    </location>
    <ligand>
        <name>NADP(+)</name>
        <dbReference type="ChEBI" id="CHEBI:58349"/>
    </ligand>
</feature>
<feature type="binding site" evidence="1">
    <location>
        <position position="346"/>
    </location>
    <ligand>
        <name>Mn(2+)</name>
        <dbReference type="ChEBI" id="CHEBI:29035"/>
    </ligand>
</feature>
<feature type="binding site" evidence="1">
    <location>
        <begin position="381"/>
        <end position="386"/>
    </location>
    <ligand>
        <name>NADP(+)</name>
        <dbReference type="ChEBI" id="CHEBI:58349"/>
    </ligand>
</feature>
<feature type="binding site" evidence="1">
    <location>
        <position position="399"/>
    </location>
    <ligand>
        <name>NADP(+)</name>
        <dbReference type="ChEBI" id="CHEBI:58349"/>
    </ligand>
</feature>
<feature type="site" description="Critical for catalysis" evidence="1">
    <location>
        <position position="211"/>
    </location>
</feature>
<feature type="site" description="Critical for catalysis" evidence="1">
    <location>
        <position position="283"/>
    </location>
</feature>
<reference key="1">
    <citation type="journal article" date="2000" name="Nature">
        <title>Sequence and analysis of chromosome 5 of the plant Arabidopsis thaliana.</title>
        <authorList>
            <person name="Tabata S."/>
            <person name="Kaneko T."/>
            <person name="Nakamura Y."/>
            <person name="Kotani H."/>
            <person name="Kato T."/>
            <person name="Asamizu E."/>
            <person name="Miyajima N."/>
            <person name="Sasamoto S."/>
            <person name="Kimura T."/>
            <person name="Hosouchi T."/>
            <person name="Kawashima K."/>
            <person name="Kohara M."/>
            <person name="Matsumoto M."/>
            <person name="Matsuno A."/>
            <person name="Muraki A."/>
            <person name="Nakayama S."/>
            <person name="Nakazaki N."/>
            <person name="Naruo K."/>
            <person name="Okumura S."/>
            <person name="Shinpo S."/>
            <person name="Takeuchi C."/>
            <person name="Wada T."/>
            <person name="Watanabe A."/>
            <person name="Yamada M."/>
            <person name="Yasuda M."/>
            <person name="Sato S."/>
            <person name="de la Bastide M."/>
            <person name="Huang E."/>
            <person name="Spiegel L."/>
            <person name="Gnoj L."/>
            <person name="O'Shaughnessy A."/>
            <person name="Preston R."/>
            <person name="Habermann K."/>
            <person name="Murray J."/>
            <person name="Johnson D."/>
            <person name="Rohlfing T."/>
            <person name="Nelson J."/>
            <person name="Stoneking T."/>
            <person name="Pepin K."/>
            <person name="Spieth J."/>
            <person name="Sekhon M."/>
            <person name="Armstrong J."/>
            <person name="Becker M."/>
            <person name="Belter E."/>
            <person name="Cordum H."/>
            <person name="Cordes M."/>
            <person name="Courtney L."/>
            <person name="Courtney W."/>
            <person name="Dante M."/>
            <person name="Du H."/>
            <person name="Edwards J."/>
            <person name="Fryman J."/>
            <person name="Haakensen B."/>
            <person name="Lamar E."/>
            <person name="Latreille P."/>
            <person name="Leonard S."/>
            <person name="Meyer R."/>
            <person name="Mulvaney E."/>
            <person name="Ozersky P."/>
            <person name="Riley A."/>
            <person name="Strowmatt C."/>
            <person name="Wagner-McPherson C."/>
            <person name="Wollam A."/>
            <person name="Yoakum M."/>
            <person name="Bell M."/>
            <person name="Dedhia N."/>
            <person name="Parnell L."/>
            <person name="Shah R."/>
            <person name="Rodriguez M."/>
            <person name="Hoon See L."/>
            <person name="Vil D."/>
            <person name="Baker J."/>
            <person name="Kirchoff K."/>
            <person name="Toth K."/>
            <person name="King L."/>
            <person name="Bahret A."/>
            <person name="Miller B."/>
            <person name="Marra M.A."/>
            <person name="Martienssen R."/>
            <person name="McCombie W.R."/>
            <person name="Wilson R.K."/>
            <person name="Murphy G."/>
            <person name="Bancroft I."/>
            <person name="Volckaert G."/>
            <person name="Wambutt R."/>
            <person name="Duesterhoeft A."/>
            <person name="Stiekema W."/>
            <person name="Pohl T."/>
            <person name="Entian K.-D."/>
            <person name="Terryn N."/>
            <person name="Hartley N."/>
            <person name="Bent E."/>
            <person name="Johnson S."/>
            <person name="Langham S.-A."/>
            <person name="McCullagh B."/>
            <person name="Robben J."/>
            <person name="Grymonprez B."/>
            <person name="Zimmermann W."/>
            <person name="Ramsperger U."/>
            <person name="Wedler H."/>
            <person name="Balke K."/>
            <person name="Wedler E."/>
            <person name="Peters S."/>
            <person name="van Staveren M."/>
            <person name="Dirkse W."/>
            <person name="Mooijman P."/>
            <person name="Klein Lankhorst R."/>
            <person name="Weitzenegger T."/>
            <person name="Bothe G."/>
            <person name="Rose M."/>
            <person name="Hauf J."/>
            <person name="Berneiser S."/>
            <person name="Hempel S."/>
            <person name="Feldpausch M."/>
            <person name="Lamberth S."/>
            <person name="Villarroel R."/>
            <person name="Gielen J."/>
            <person name="Ardiles W."/>
            <person name="Bents O."/>
            <person name="Lemcke K."/>
            <person name="Kolesov G."/>
            <person name="Mayer K.F.X."/>
            <person name="Rudd S."/>
            <person name="Schoof H."/>
            <person name="Schueller C."/>
            <person name="Zaccaria P."/>
            <person name="Mewes H.-W."/>
            <person name="Bevan M."/>
            <person name="Fransz P.F."/>
        </authorList>
    </citation>
    <scope>NUCLEOTIDE SEQUENCE [LARGE SCALE GENOMIC DNA]</scope>
    <source>
        <strain>cv. Columbia</strain>
    </source>
</reference>
<reference key="2">
    <citation type="journal article" date="2017" name="Plant J.">
        <title>Araport11: a complete reannotation of the Arabidopsis thaliana reference genome.</title>
        <authorList>
            <person name="Cheng C.Y."/>
            <person name="Krishnakumar V."/>
            <person name="Chan A.P."/>
            <person name="Thibaud-Nissen F."/>
            <person name="Schobel S."/>
            <person name="Town C.D."/>
        </authorList>
    </citation>
    <scope>GENOME REANNOTATION</scope>
    <source>
        <strain>cv. Columbia</strain>
    </source>
</reference>
<reference key="3">
    <citation type="journal article" date="2003" name="Science">
        <title>Empirical analysis of transcriptional activity in the Arabidopsis genome.</title>
        <authorList>
            <person name="Yamada K."/>
            <person name="Lim J."/>
            <person name="Dale J.M."/>
            <person name="Chen H."/>
            <person name="Shinn P."/>
            <person name="Palm C.J."/>
            <person name="Southwick A.M."/>
            <person name="Wu H.C."/>
            <person name="Kim C.J."/>
            <person name="Nguyen M."/>
            <person name="Pham P.K."/>
            <person name="Cheuk R.F."/>
            <person name="Karlin-Newmann G."/>
            <person name="Liu S.X."/>
            <person name="Lam B."/>
            <person name="Sakano H."/>
            <person name="Wu T."/>
            <person name="Yu G."/>
            <person name="Miranda M."/>
            <person name="Quach H.L."/>
            <person name="Tripp M."/>
            <person name="Chang C.H."/>
            <person name="Lee J.M."/>
            <person name="Toriumi M.J."/>
            <person name="Chan M.M."/>
            <person name="Tang C.C."/>
            <person name="Onodera C.S."/>
            <person name="Deng J.M."/>
            <person name="Akiyama K."/>
            <person name="Ansari Y."/>
            <person name="Arakawa T."/>
            <person name="Banh J."/>
            <person name="Banno F."/>
            <person name="Bowser L."/>
            <person name="Brooks S.Y."/>
            <person name="Carninci P."/>
            <person name="Chao Q."/>
            <person name="Choy N."/>
            <person name="Enju A."/>
            <person name="Goldsmith A.D."/>
            <person name="Gurjal M."/>
            <person name="Hansen N.F."/>
            <person name="Hayashizaki Y."/>
            <person name="Johnson-Hopson C."/>
            <person name="Hsuan V.W."/>
            <person name="Iida K."/>
            <person name="Karnes M."/>
            <person name="Khan S."/>
            <person name="Koesema E."/>
            <person name="Ishida J."/>
            <person name="Jiang P.X."/>
            <person name="Jones T."/>
            <person name="Kawai J."/>
            <person name="Kamiya A."/>
            <person name="Meyers C."/>
            <person name="Nakajima M."/>
            <person name="Narusaka M."/>
            <person name="Seki M."/>
            <person name="Sakurai T."/>
            <person name="Satou M."/>
            <person name="Tamse R."/>
            <person name="Vaysberg M."/>
            <person name="Wallender E.K."/>
            <person name="Wong C."/>
            <person name="Yamamura Y."/>
            <person name="Yuan S."/>
            <person name="Shinozaki K."/>
            <person name="Davis R.W."/>
            <person name="Theologis A."/>
            <person name="Ecker J.R."/>
        </authorList>
    </citation>
    <scope>NUCLEOTIDE SEQUENCE [LARGE SCALE MRNA]</scope>
    <source>
        <strain>cv. Columbia</strain>
    </source>
</reference>
<reference key="4">
    <citation type="journal article" date="2008" name="PLoS ONE">
        <title>Sorting signals, N-terminal modifications and abundance of the chloroplast proteome.</title>
        <authorList>
            <person name="Zybailov B."/>
            <person name="Rutschow H."/>
            <person name="Friso G."/>
            <person name="Rudella A."/>
            <person name="Emanuelsson O."/>
            <person name="Sun Q."/>
            <person name="van Wijk K.J."/>
        </authorList>
    </citation>
    <scope>IDENTIFICATION BY MASS SPECTROMETRY</scope>
    <scope>SUBCELLULAR LOCATION [LARGE SCALE ANALYSIS]</scope>
</reference>
<reference key="5">
    <citation type="journal article" date="2004" name="Plant Cell">
        <title>Experimental analysis of the Arabidopsis mitochondrial proteome highlights signaling and regulatory components, provides assessment of targeting prediction programs, and indicates plant-specific mitochondrial proteins.</title>
        <authorList>
            <person name="Heazlewood J.L."/>
            <person name="Tonti-Filippini J.S."/>
            <person name="Gout A.M."/>
            <person name="Day D.A."/>
            <person name="Whelan J."/>
            <person name="Millar A.H."/>
        </authorList>
    </citation>
    <scope>IDENTIFICATION BY MASS SPECTROMETRY</scope>
    <scope>SUBCELLULAR LOCATION [LARGE SCALE ANALYSIS]</scope>
    <source>
        <strain>cv. Landsberg erecta</strain>
    </source>
</reference>
<reference key="6">
    <citation type="journal article" date="2011" name="Plant Physiol.">
        <title>Defining the protein complex proteome of plant mitochondria.</title>
        <authorList>
            <person name="Klodmann J."/>
            <person name="Senkler M."/>
            <person name="Rode C."/>
            <person name="Braun H.-P."/>
        </authorList>
    </citation>
    <scope>IDENTIFICATION BY MASS SPECTROMETRY</scope>
    <scope>SUBCELLULAR LOCATION [LARGE SCALE ANALYSIS]</scope>
</reference>
<sequence length="485" mass="54196">MLNKLTHGVFTYRASLTAMLSSSTSAGLSSSFVSSRFLSSGIFSSGASRNRVTFPVQFHRASAVRCFASSGGSDRIQVQNPIVEMDGDEMTRVIWSMIKEKLILPYLDLDIKYFDLGILNRDATDDKVTVESAEAALKYNVAIKCATITPDEGRVKEFGLKSMWRSPNGTIRNILDGTVFREPIMCSNIPRLVPGWEKPICIGRHAFGDQYRATDTVIKGPGKLKMVFVPEDGNAPVELDVYDFKGPGVALAMYNVDESIRAFAESSMAMALTKKWPLYLSTKNTILKKYDGRFKDIFQEVYEANWKQKFEEHSIWYEHRLIDDMVAYAVKSEGGYVWACKNYDGDVQSDLLAQGFGSLGLMTSVLLSADGKTLESEAAHGTVTRHFRLHQKGQETSTNSIASIFAWTRGLEHRAKLDKNEKLMDFVKKLESSCVNTVETGKMTKDLALLIHGPKVSRDLFLNTEEFIDAVASKLKTQFKELPLV</sequence>
<protein>
    <recommendedName>
        <fullName>Isocitrate dehydrogenase [NADP], chloroplastic/mitochondrial</fullName>
        <ecNumber>1.1.1.42</ecNumber>
    </recommendedName>
</protein>
<proteinExistence type="evidence at protein level"/>
<organism>
    <name type="scientific">Arabidopsis thaliana</name>
    <name type="common">Mouse-ear cress</name>
    <dbReference type="NCBI Taxonomy" id="3702"/>
    <lineage>
        <taxon>Eukaryota</taxon>
        <taxon>Viridiplantae</taxon>
        <taxon>Streptophyta</taxon>
        <taxon>Embryophyta</taxon>
        <taxon>Tracheophyta</taxon>
        <taxon>Spermatophyta</taxon>
        <taxon>Magnoliopsida</taxon>
        <taxon>eudicotyledons</taxon>
        <taxon>Gunneridae</taxon>
        <taxon>Pentapetalae</taxon>
        <taxon>rosids</taxon>
        <taxon>malvids</taxon>
        <taxon>Brassicales</taxon>
        <taxon>Brassicaceae</taxon>
        <taxon>Camelineae</taxon>
        <taxon>Arabidopsis</taxon>
    </lineage>
</organism>
<accession>Q8LPJ5</accession>
<accession>Q9LYK1</accession>
<name>ICDHP_ARATH</name>
<evidence type="ECO:0000250" key="1"/>
<evidence type="ECO:0000255" key="2"/>
<evidence type="ECO:0000269" key="3">
    <source>
    </source>
</evidence>
<evidence type="ECO:0000269" key="4">
    <source>
    </source>
</evidence>
<evidence type="ECO:0000305" key="5"/>
<keyword id="KW-0150">Chloroplast</keyword>
<keyword id="KW-0460">Magnesium</keyword>
<keyword id="KW-0464">Manganese</keyword>
<keyword id="KW-0479">Metal-binding</keyword>
<keyword id="KW-0496">Mitochondrion</keyword>
<keyword id="KW-0521">NADP</keyword>
<keyword id="KW-0560">Oxidoreductase</keyword>
<keyword id="KW-0934">Plastid</keyword>
<keyword id="KW-1185">Reference proteome</keyword>
<keyword id="KW-0346">Stress response</keyword>
<keyword id="KW-0809">Transit peptide</keyword>
<keyword id="KW-0816">Tricarboxylic acid cycle</keyword>
<dbReference type="EC" id="1.1.1.42"/>
<dbReference type="EMBL" id="AL163792">
    <property type="protein sequence ID" value="CAB87626.1"/>
    <property type="status" value="ALT_SEQ"/>
    <property type="molecule type" value="Genomic_DNA"/>
</dbReference>
<dbReference type="EMBL" id="CP002688">
    <property type="protein sequence ID" value="AED92051.1"/>
    <property type="molecule type" value="Genomic_DNA"/>
</dbReference>
<dbReference type="EMBL" id="AY099683">
    <property type="protein sequence ID" value="AAM20534.1"/>
    <property type="molecule type" value="mRNA"/>
</dbReference>
<dbReference type="EMBL" id="BT000276">
    <property type="protein sequence ID" value="AAN15595.1"/>
    <property type="molecule type" value="mRNA"/>
</dbReference>
<dbReference type="PIR" id="T48632">
    <property type="entry name" value="T48632"/>
</dbReference>
<dbReference type="RefSeq" id="NP_196963.2">
    <property type="nucleotide sequence ID" value="NM_121463.5"/>
</dbReference>
<dbReference type="SMR" id="Q8LPJ5"/>
<dbReference type="BioGRID" id="16588">
    <property type="interactions" value="3"/>
</dbReference>
<dbReference type="FunCoup" id="Q8LPJ5">
    <property type="interactions" value="3427"/>
</dbReference>
<dbReference type="STRING" id="3702.Q8LPJ5"/>
<dbReference type="PaxDb" id="3702-AT5G14590.1"/>
<dbReference type="ProteomicsDB" id="228757"/>
<dbReference type="EnsemblPlants" id="AT5G14590.1">
    <property type="protein sequence ID" value="AT5G14590.1"/>
    <property type="gene ID" value="AT5G14590"/>
</dbReference>
<dbReference type="GeneID" id="831311"/>
<dbReference type="Gramene" id="AT5G14590.1">
    <property type="protein sequence ID" value="AT5G14590.1"/>
    <property type="gene ID" value="AT5G14590"/>
</dbReference>
<dbReference type="KEGG" id="ath:AT5G14590"/>
<dbReference type="Araport" id="AT5G14590"/>
<dbReference type="TAIR" id="AT5G14590"/>
<dbReference type="eggNOG" id="KOG1526">
    <property type="taxonomic scope" value="Eukaryota"/>
</dbReference>
<dbReference type="HOGENOM" id="CLU_023296_1_1_1"/>
<dbReference type="InParanoid" id="Q8LPJ5"/>
<dbReference type="OMA" id="EYPVYNF"/>
<dbReference type="OrthoDB" id="248923at2759"/>
<dbReference type="PhylomeDB" id="Q8LPJ5"/>
<dbReference type="BioCyc" id="ARA:AT5G14590-MONOMER"/>
<dbReference type="PRO" id="PR:Q8LPJ5"/>
<dbReference type="Proteomes" id="UP000006548">
    <property type="component" value="Chromosome 5"/>
</dbReference>
<dbReference type="ExpressionAtlas" id="Q8LPJ5">
    <property type="expression patterns" value="baseline and differential"/>
</dbReference>
<dbReference type="GO" id="GO:0009507">
    <property type="term" value="C:chloroplast"/>
    <property type="evidence" value="ECO:0007005"/>
    <property type="project" value="TAIR"/>
</dbReference>
<dbReference type="GO" id="GO:0009570">
    <property type="term" value="C:chloroplast stroma"/>
    <property type="evidence" value="ECO:0007005"/>
    <property type="project" value="TAIR"/>
</dbReference>
<dbReference type="GO" id="GO:0009534">
    <property type="term" value="C:chloroplast thylakoid"/>
    <property type="evidence" value="ECO:0007005"/>
    <property type="project" value="TAIR"/>
</dbReference>
<dbReference type="GO" id="GO:0005829">
    <property type="term" value="C:cytosol"/>
    <property type="evidence" value="ECO:0007005"/>
    <property type="project" value="TAIR"/>
</dbReference>
<dbReference type="GO" id="GO:0005739">
    <property type="term" value="C:mitochondrion"/>
    <property type="evidence" value="ECO:0007005"/>
    <property type="project" value="TAIR"/>
</dbReference>
<dbReference type="GO" id="GO:0009536">
    <property type="term" value="C:plastid"/>
    <property type="evidence" value="ECO:0007005"/>
    <property type="project" value="TAIR"/>
</dbReference>
<dbReference type="GO" id="GO:0004450">
    <property type="term" value="F:isocitrate dehydrogenase (NADP+) activity"/>
    <property type="evidence" value="ECO:0007669"/>
    <property type="project" value="UniProtKB-EC"/>
</dbReference>
<dbReference type="GO" id="GO:0000287">
    <property type="term" value="F:magnesium ion binding"/>
    <property type="evidence" value="ECO:0007669"/>
    <property type="project" value="InterPro"/>
</dbReference>
<dbReference type="GO" id="GO:0051287">
    <property type="term" value="F:NAD binding"/>
    <property type="evidence" value="ECO:0007669"/>
    <property type="project" value="InterPro"/>
</dbReference>
<dbReference type="GO" id="GO:0006102">
    <property type="term" value="P:isocitrate metabolic process"/>
    <property type="evidence" value="ECO:0007669"/>
    <property type="project" value="InterPro"/>
</dbReference>
<dbReference type="GO" id="GO:0006099">
    <property type="term" value="P:tricarboxylic acid cycle"/>
    <property type="evidence" value="ECO:0007669"/>
    <property type="project" value="UniProtKB-KW"/>
</dbReference>
<dbReference type="FunFam" id="3.40.718.10:FF:000007">
    <property type="entry name" value="Isocitrate dehydrogenase [NADP]"/>
    <property type="match status" value="1"/>
</dbReference>
<dbReference type="Gene3D" id="3.40.718.10">
    <property type="entry name" value="Isopropylmalate Dehydrogenase"/>
    <property type="match status" value="1"/>
</dbReference>
<dbReference type="InterPro" id="IPR019818">
    <property type="entry name" value="IsoCit/isopropylmalate_DH_CS"/>
</dbReference>
<dbReference type="InterPro" id="IPR004790">
    <property type="entry name" value="Isocitrate_DH_NADP"/>
</dbReference>
<dbReference type="InterPro" id="IPR024084">
    <property type="entry name" value="IsoPropMal-DH-like_dom"/>
</dbReference>
<dbReference type="NCBIfam" id="TIGR00127">
    <property type="entry name" value="nadp_idh_euk"/>
    <property type="match status" value="1"/>
</dbReference>
<dbReference type="NCBIfam" id="NF006156">
    <property type="entry name" value="PRK08299.1"/>
    <property type="match status" value="1"/>
</dbReference>
<dbReference type="PANTHER" id="PTHR11822:SF5">
    <property type="entry name" value="ISOCITRATE DEHYDROGENASE [NADP], CHLOROPLASTIC_MITOCHONDRIAL"/>
    <property type="match status" value="1"/>
</dbReference>
<dbReference type="PANTHER" id="PTHR11822">
    <property type="entry name" value="NADP-SPECIFIC ISOCITRATE DEHYDROGENASE"/>
    <property type="match status" value="1"/>
</dbReference>
<dbReference type="Pfam" id="PF00180">
    <property type="entry name" value="Iso_dh"/>
    <property type="match status" value="1"/>
</dbReference>
<dbReference type="PIRSF" id="PIRSF000108">
    <property type="entry name" value="IDH_NADP"/>
    <property type="match status" value="1"/>
</dbReference>
<dbReference type="SMART" id="SM01329">
    <property type="entry name" value="Iso_dh"/>
    <property type="match status" value="1"/>
</dbReference>
<dbReference type="SUPFAM" id="SSF53659">
    <property type="entry name" value="Isocitrate/Isopropylmalate dehydrogenase-like"/>
    <property type="match status" value="1"/>
</dbReference>
<dbReference type="PROSITE" id="PS00470">
    <property type="entry name" value="IDH_IMDH"/>
    <property type="match status" value="1"/>
</dbReference>
<gene>
    <name type="ordered locus">At5g14590</name>
    <name type="ORF">T15N1.80</name>
</gene>
<comment type="function">
    <text evidence="1">May be involved in response to oxidative stresses.</text>
</comment>
<comment type="catalytic activity">
    <reaction>
        <text>D-threo-isocitrate + NADP(+) = 2-oxoglutarate + CO2 + NADPH</text>
        <dbReference type="Rhea" id="RHEA:19629"/>
        <dbReference type="ChEBI" id="CHEBI:15562"/>
        <dbReference type="ChEBI" id="CHEBI:16526"/>
        <dbReference type="ChEBI" id="CHEBI:16810"/>
        <dbReference type="ChEBI" id="CHEBI:57783"/>
        <dbReference type="ChEBI" id="CHEBI:58349"/>
        <dbReference type="EC" id="1.1.1.42"/>
    </reaction>
</comment>
<comment type="cofactor">
    <cofactor evidence="1">
        <name>Mg(2+)</name>
        <dbReference type="ChEBI" id="CHEBI:18420"/>
    </cofactor>
    <cofactor evidence="1">
        <name>Mn(2+)</name>
        <dbReference type="ChEBI" id="CHEBI:29035"/>
    </cofactor>
    <text evidence="1">Binds 1 Mg(2+) or Mn(2+) ion per subunit.</text>
</comment>
<comment type="subcellular location">
    <subcellularLocation>
        <location evidence="3">Plastid</location>
        <location evidence="3">Chloroplast</location>
    </subcellularLocation>
    <subcellularLocation>
        <location evidence="4">Mitochondrion</location>
    </subcellularLocation>
</comment>
<comment type="similarity">
    <text evidence="5">Belongs to the isocitrate and isopropylmalate dehydrogenases family.</text>
</comment>
<comment type="sequence caution" evidence="5">
    <conflict type="erroneous gene model prediction">
        <sequence resource="EMBL-CDS" id="CAB87626"/>
    </conflict>
</comment>